<gene>
    <name evidence="2" type="primary">deoD</name>
    <name type="ordered locus">YpsIP31758_3495</name>
</gene>
<comment type="function">
    <text evidence="2">Catalyzes the reversible phosphorolytic breakdown of the N-glycosidic bond in the beta-(deoxy)ribonucleoside molecules, with the formation of the corresponding free purine bases and pentose-1-phosphate.</text>
</comment>
<comment type="catalytic activity">
    <reaction evidence="2">
        <text>a purine D-ribonucleoside + phosphate = a purine nucleobase + alpha-D-ribose 1-phosphate</text>
        <dbReference type="Rhea" id="RHEA:19805"/>
        <dbReference type="ChEBI" id="CHEBI:26386"/>
        <dbReference type="ChEBI" id="CHEBI:43474"/>
        <dbReference type="ChEBI" id="CHEBI:57720"/>
        <dbReference type="ChEBI" id="CHEBI:142355"/>
        <dbReference type="EC" id="2.4.2.1"/>
    </reaction>
</comment>
<comment type="catalytic activity">
    <reaction evidence="2">
        <text>a purine 2'-deoxy-D-ribonucleoside + phosphate = a purine nucleobase + 2-deoxy-alpha-D-ribose 1-phosphate</text>
        <dbReference type="Rhea" id="RHEA:36431"/>
        <dbReference type="ChEBI" id="CHEBI:26386"/>
        <dbReference type="ChEBI" id="CHEBI:43474"/>
        <dbReference type="ChEBI" id="CHEBI:57259"/>
        <dbReference type="ChEBI" id="CHEBI:142361"/>
        <dbReference type="EC" id="2.4.2.1"/>
    </reaction>
</comment>
<comment type="subunit">
    <text evidence="2">Homohexamer; trimer of homodimers.</text>
</comment>
<comment type="similarity">
    <text evidence="2">Belongs to the PNP/UDP phosphorylase family.</text>
</comment>
<sequence>MATPHINAEMGDFADVVLMPGDPLRAKFIAETFLQDVREVNNVRGMLGFTGTYKGRKISVMGHGMGIPSCSIYAKELITDFGVKKIIRVGSCGAVRTDVKLRDVVIGMGACTDSKVNRMRFKDHDYAAIADFEMTRNAVDAAKAKGVNVRVGNLFSADLFYTPDPQMFDVMEKYGILGVEMEAAGIYGVAAEFGAKALTICTVSDHIRTGEQTTAAERQTTFNDMIEIALESVLLGDNA</sequence>
<organism>
    <name type="scientific">Yersinia pseudotuberculosis serotype O:1b (strain IP 31758)</name>
    <dbReference type="NCBI Taxonomy" id="349747"/>
    <lineage>
        <taxon>Bacteria</taxon>
        <taxon>Pseudomonadati</taxon>
        <taxon>Pseudomonadota</taxon>
        <taxon>Gammaproteobacteria</taxon>
        <taxon>Enterobacterales</taxon>
        <taxon>Yersiniaceae</taxon>
        <taxon>Yersinia</taxon>
    </lineage>
</organism>
<name>DEOD_YERP3</name>
<evidence type="ECO:0000250" key="1">
    <source>
        <dbReference type="UniProtKB" id="P50389"/>
    </source>
</evidence>
<evidence type="ECO:0000255" key="2">
    <source>
        <dbReference type="HAMAP-Rule" id="MF_01627"/>
    </source>
</evidence>
<reference key="1">
    <citation type="journal article" date="2007" name="PLoS Genet.">
        <title>The complete genome sequence of Yersinia pseudotuberculosis IP31758, the causative agent of Far East scarlet-like fever.</title>
        <authorList>
            <person name="Eppinger M."/>
            <person name="Rosovitz M.J."/>
            <person name="Fricke W.F."/>
            <person name="Rasko D.A."/>
            <person name="Kokorina G."/>
            <person name="Fayolle C."/>
            <person name="Lindler L.E."/>
            <person name="Carniel E."/>
            <person name="Ravel J."/>
        </authorList>
    </citation>
    <scope>NUCLEOTIDE SEQUENCE [LARGE SCALE GENOMIC DNA]</scope>
    <source>
        <strain>IP 31758</strain>
    </source>
</reference>
<protein>
    <recommendedName>
        <fullName evidence="2">Purine nucleoside phosphorylase DeoD-type</fullName>
        <shortName evidence="2">PNP</shortName>
        <ecNumber evidence="2">2.4.2.1</ecNumber>
    </recommendedName>
</protein>
<accession>A7FMH2</accession>
<proteinExistence type="inferred from homology"/>
<keyword id="KW-0328">Glycosyltransferase</keyword>
<keyword id="KW-0808">Transferase</keyword>
<feature type="chain" id="PRO_1000069650" description="Purine nucleoside phosphorylase DeoD-type">
    <location>
        <begin position="1"/>
        <end position="239"/>
    </location>
</feature>
<feature type="active site" description="Proton donor" evidence="2">
    <location>
        <position position="205"/>
    </location>
</feature>
<feature type="binding site" evidence="1">
    <location>
        <position position="5"/>
    </location>
    <ligand>
        <name>a purine D-ribonucleoside</name>
        <dbReference type="ChEBI" id="CHEBI:142355"/>
        <note>ligand shared between dimeric partners</note>
    </ligand>
</feature>
<feature type="binding site" description="in other chain" evidence="1">
    <location>
        <position position="21"/>
    </location>
    <ligand>
        <name>phosphate</name>
        <dbReference type="ChEBI" id="CHEBI:43474"/>
        <note>ligand shared between dimeric partners</note>
    </ligand>
</feature>
<feature type="binding site" description="in other chain" evidence="1">
    <location>
        <position position="25"/>
    </location>
    <ligand>
        <name>phosphate</name>
        <dbReference type="ChEBI" id="CHEBI:43474"/>
        <note>ligand shared between dimeric partners</note>
    </ligand>
</feature>
<feature type="binding site" evidence="1">
    <location>
        <position position="44"/>
    </location>
    <ligand>
        <name>phosphate</name>
        <dbReference type="ChEBI" id="CHEBI:43474"/>
        <note>ligand shared between dimeric partners</note>
    </ligand>
</feature>
<feature type="binding site" description="in other chain" evidence="1">
    <location>
        <begin position="88"/>
        <end position="91"/>
    </location>
    <ligand>
        <name>phosphate</name>
        <dbReference type="ChEBI" id="CHEBI:43474"/>
        <note>ligand shared between dimeric partners</note>
    </ligand>
</feature>
<feature type="binding site" description="in other chain" evidence="1">
    <location>
        <begin position="180"/>
        <end position="182"/>
    </location>
    <ligand>
        <name>a purine D-ribonucleoside</name>
        <dbReference type="ChEBI" id="CHEBI:142355"/>
        <note>ligand shared between dimeric partners</note>
    </ligand>
</feature>
<feature type="binding site" description="in other chain" evidence="1">
    <location>
        <begin position="204"/>
        <end position="205"/>
    </location>
    <ligand>
        <name>a purine D-ribonucleoside</name>
        <dbReference type="ChEBI" id="CHEBI:142355"/>
        <note>ligand shared between dimeric partners</note>
    </ligand>
</feature>
<feature type="site" description="Important for catalytic activity" evidence="2">
    <location>
        <position position="218"/>
    </location>
</feature>
<dbReference type="EC" id="2.4.2.1" evidence="2"/>
<dbReference type="EMBL" id="CP000720">
    <property type="protein sequence ID" value="ABS47307.1"/>
    <property type="molecule type" value="Genomic_DNA"/>
</dbReference>
<dbReference type="RefSeq" id="WP_011191689.1">
    <property type="nucleotide sequence ID" value="NC_009708.1"/>
</dbReference>
<dbReference type="SMR" id="A7FMH2"/>
<dbReference type="GeneID" id="49787416"/>
<dbReference type="KEGG" id="ypi:YpsIP31758_3495"/>
<dbReference type="HOGENOM" id="CLU_068457_2_0_6"/>
<dbReference type="Proteomes" id="UP000002412">
    <property type="component" value="Chromosome"/>
</dbReference>
<dbReference type="GO" id="GO:0005829">
    <property type="term" value="C:cytosol"/>
    <property type="evidence" value="ECO:0007669"/>
    <property type="project" value="TreeGrafter"/>
</dbReference>
<dbReference type="GO" id="GO:0004731">
    <property type="term" value="F:purine-nucleoside phosphorylase activity"/>
    <property type="evidence" value="ECO:0007669"/>
    <property type="project" value="UniProtKB-UniRule"/>
</dbReference>
<dbReference type="GO" id="GO:0006152">
    <property type="term" value="P:purine nucleoside catabolic process"/>
    <property type="evidence" value="ECO:0007669"/>
    <property type="project" value="TreeGrafter"/>
</dbReference>
<dbReference type="CDD" id="cd09006">
    <property type="entry name" value="PNP_EcPNPI-like"/>
    <property type="match status" value="1"/>
</dbReference>
<dbReference type="FunFam" id="3.40.50.1580:FF:000002">
    <property type="entry name" value="Purine nucleoside phosphorylase DeoD-type"/>
    <property type="match status" value="1"/>
</dbReference>
<dbReference type="Gene3D" id="3.40.50.1580">
    <property type="entry name" value="Nucleoside phosphorylase domain"/>
    <property type="match status" value="1"/>
</dbReference>
<dbReference type="HAMAP" id="MF_01627">
    <property type="entry name" value="Pur_nucleosid_phosp"/>
    <property type="match status" value="1"/>
</dbReference>
<dbReference type="InterPro" id="IPR004402">
    <property type="entry name" value="DeoD-type"/>
</dbReference>
<dbReference type="InterPro" id="IPR018016">
    <property type="entry name" value="Nucleoside_phosphorylase_CS"/>
</dbReference>
<dbReference type="InterPro" id="IPR000845">
    <property type="entry name" value="Nucleoside_phosphorylase_d"/>
</dbReference>
<dbReference type="InterPro" id="IPR035994">
    <property type="entry name" value="Nucleoside_phosphorylase_sf"/>
</dbReference>
<dbReference type="NCBIfam" id="TIGR00107">
    <property type="entry name" value="deoD"/>
    <property type="match status" value="1"/>
</dbReference>
<dbReference type="NCBIfam" id="NF004489">
    <property type="entry name" value="PRK05819.1"/>
    <property type="match status" value="1"/>
</dbReference>
<dbReference type="NCBIfam" id="NF009914">
    <property type="entry name" value="PRK13374.1"/>
    <property type="match status" value="1"/>
</dbReference>
<dbReference type="PANTHER" id="PTHR43691:SF2">
    <property type="entry name" value="PURINE NUCLEOSIDE PHOSPHORYLASE DEOD-TYPE"/>
    <property type="match status" value="1"/>
</dbReference>
<dbReference type="PANTHER" id="PTHR43691">
    <property type="entry name" value="URIDINE PHOSPHORYLASE"/>
    <property type="match status" value="1"/>
</dbReference>
<dbReference type="Pfam" id="PF01048">
    <property type="entry name" value="PNP_UDP_1"/>
    <property type="match status" value="1"/>
</dbReference>
<dbReference type="SUPFAM" id="SSF53167">
    <property type="entry name" value="Purine and uridine phosphorylases"/>
    <property type="match status" value="1"/>
</dbReference>
<dbReference type="PROSITE" id="PS01232">
    <property type="entry name" value="PNP_UDP_1"/>
    <property type="match status" value="1"/>
</dbReference>